<sequence>MRKLFSFGRRLGQALLSSMDQEYAGPGYDIRDWELRKIHRAAIKGDAAEVERCLTRRFRDLDARDRKDRTVLHLACAHGRVQVVTLLLHRRCQIDICDRLNRTPLMKAVHSQEEACAIVLLECGANPNIEDIYGNTALHYAVYNKGTSLAERLLSHHANIEALNKEGNTPLLFAINSRRQHMVEFLLKNQANIHAVDNFKRTALILAVQHNLSSIVTLLLQQNIRISSQDMFGQTAEDYALCSDLRSIRQQILEHKNKMLKNHLRNDNQETAAMKPANLKKRKERAKAEHNLKVASEEKQERLQRSENKQPQDSQSYGKKKDAMYGNFMLKKDIAMLKEELYAIKNDSLRKEKKYIQEIKSITEINANFEKSVRLNEKMITKTVARYSQQLNDLKAENARLNSELEKEKHNKERLEAEVESLHSSLATAINEYNEIVERKDLELVLWRADDVSRHEKMGSNISQLTDKNELLTEQVHKARVKFNTLKGKLRETRDALREKTLALGSVQLDLRQAQHRIKEMKQMHPNGEAKESQSIGKQNSLEERIRQQELENLLLERQLEDARKEGDNKEIVINIHRDCLENGKEDLLEERNKELMKEYNYLKEKLLQCEKEKAEREVIVREFQEELVDHLKTFSISESPLEGTSHCHINLNETWTSKKKLFQVEIQPEEKHEEFRKLFELISLLNYTADQIRKKNRELEEEATGYKKCLEMTINMLNAFANEDFSCHGDLNTDQLKMDILFKKLKQKFNDLVAEKEAVSSECVNLAKDNEVLHQELLSMRNVQEKCEKLEKDKKMLEEEVLNLKTHMEKDMVELGKLQEYKSELDERAVQEIEKLEEIHLQKQAEYEKQLEQLNKDNTASLKKKELTLKDVECKFSKMKTAYEEVTTELEEFKEAFAGAVKANNSMSKKLMKSDKKIAVISTKLFTEKQRMKYFLSTLPTRPEPELPCVENLNSIELNRKYIPKTAIRIPTSNPQTSNNCKNFLTEVLLC</sequence>
<name>AN18A_HUMAN</name>
<gene>
    <name type="primary">ANKRD18A</name>
    <name type="synonym">KIAA2015</name>
</gene>
<evidence type="ECO:0000255" key="1"/>
<evidence type="ECO:0000256" key="2">
    <source>
        <dbReference type="SAM" id="MobiDB-lite"/>
    </source>
</evidence>
<evidence type="ECO:0000269" key="3">
    <source>
    </source>
</evidence>
<evidence type="ECO:0000269" key="4">
    <source ref="1"/>
</evidence>
<evidence type="ECO:0000303" key="5">
    <source>
    </source>
</evidence>
<evidence type="ECO:0000305" key="6"/>
<accession>Q8IVF6</accession>
<accession>A7MD11</accession>
<accession>A8MVU5</accession>
<accession>Q5SY86</accession>
<accession>Q7Z468</accession>
<accession>Q8NA88</accession>
<proteinExistence type="evidence at transcript level"/>
<comment type="alternative products">
    <event type="alternative splicing"/>
    <isoform>
        <id>Q8IVF6-1</id>
        <name>1</name>
        <sequence type="displayed"/>
    </isoform>
    <isoform>
        <id>Q8IVF6-2</id>
        <name>2</name>
        <sequence type="described" ref="VSP_056912 VSP_056913"/>
    </isoform>
</comment>
<comment type="sequence caution" evidence="6">
    <conflict type="miscellaneous discrepancy">
        <sequence resource="EMBL-CDS" id="AAH56266"/>
    </conflict>
    <text>Contaminating sequence. Potential poly-A sequence.</text>
</comment>
<comment type="sequence caution" evidence="6">
    <conflict type="erroneous initiation">
        <sequence resource="EMBL-CDS" id="BAC23111"/>
    </conflict>
</comment>
<organism>
    <name type="scientific">Homo sapiens</name>
    <name type="common">Human</name>
    <dbReference type="NCBI Taxonomy" id="9606"/>
    <lineage>
        <taxon>Eukaryota</taxon>
        <taxon>Metazoa</taxon>
        <taxon>Chordata</taxon>
        <taxon>Craniata</taxon>
        <taxon>Vertebrata</taxon>
        <taxon>Euteleostomi</taxon>
        <taxon>Mammalia</taxon>
        <taxon>Eutheria</taxon>
        <taxon>Euarchontoglires</taxon>
        <taxon>Primates</taxon>
        <taxon>Haplorrhini</taxon>
        <taxon>Catarrhini</taxon>
        <taxon>Hominidae</taxon>
        <taxon>Homo</taxon>
    </lineage>
</organism>
<protein>
    <recommendedName>
        <fullName>Ankyrin repeat domain-containing protein 18A</fullName>
    </recommendedName>
</protein>
<feature type="chain" id="PRO_0000066912" description="Ankyrin repeat domain-containing protein 18A">
    <location>
        <begin position="1"/>
        <end position="992"/>
    </location>
</feature>
<feature type="repeat" description="ANK 1">
    <location>
        <begin position="67"/>
        <end position="96"/>
    </location>
</feature>
<feature type="repeat" description="ANK 2">
    <location>
        <begin position="100"/>
        <end position="129"/>
    </location>
</feature>
<feature type="repeat" description="ANK 3">
    <location>
        <begin position="133"/>
        <end position="162"/>
    </location>
</feature>
<feature type="repeat" description="ANK 4">
    <location>
        <begin position="166"/>
        <end position="195"/>
    </location>
</feature>
<feature type="repeat" description="ANK 5">
    <location>
        <begin position="199"/>
        <end position="228"/>
    </location>
</feature>
<feature type="region of interest" description="Disordered" evidence="2">
    <location>
        <begin position="262"/>
        <end position="320"/>
    </location>
</feature>
<feature type="coiled-coil region" evidence="1">
    <location>
        <begin position="278"/>
        <end position="310"/>
    </location>
</feature>
<feature type="coiled-coil region" evidence="1">
    <location>
        <begin position="378"/>
        <end position="618"/>
    </location>
</feature>
<feature type="coiled-coil region" evidence="1">
    <location>
        <begin position="683"/>
        <end position="713"/>
    </location>
</feature>
<feature type="coiled-coil region" evidence="1">
    <location>
        <begin position="743"/>
        <end position="899"/>
    </location>
</feature>
<feature type="compositionally biased region" description="Basic and acidic residues" evidence="2">
    <location>
        <begin position="286"/>
        <end position="310"/>
    </location>
</feature>
<feature type="splice variant" id="VSP_056912" description="In isoform 2." evidence="5">
    <location>
        <begin position="1"/>
        <end position="879"/>
    </location>
</feature>
<feature type="splice variant" id="VSP_056913" description="In isoform 2." evidence="5">
    <original>VLL</original>
    <variation>MELDRVEQIITGTKKSFAMLSTCSRLLSFVESTAPRKHRRALPIMRSLVPNRRTTVASTESRTNRPGGVRSPGLQLEGTSTLQWEQGPIAHPRHR</variation>
    <location>
        <begin position="989"/>
        <end position="991"/>
    </location>
</feature>
<feature type="sequence variant" id="VAR_055507" description="In dbSNP:rs1832313." evidence="3 4">
    <original>E</original>
    <variation>K</variation>
    <location>
        <position position="130"/>
    </location>
</feature>
<feature type="sequence variant" id="VAR_055508" description="In dbSNP:rs632200.">
    <original>A</original>
    <variation>E</variation>
    <location>
        <position position="277"/>
    </location>
</feature>
<feature type="sequence variant" id="VAR_055509" description="In dbSNP:rs2996347.">
    <original>N</original>
    <variation>S</variation>
    <location>
        <position position="484"/>
    </location>
</feature>
<feature type="sequence variant" id="VAR_055510" description="In dbSNP:rs2799163.">
    <original>Y</original>
    <variation>C</variation>
    <location>
        <position position="688"/>
    </location>
</feature>
<feature type="sequence variant" id="VAR_059118" description="In dbSNP:rs12341435.">
    <original>E</original>
    <variation>D</variation>
    <location>
        <position position="838"/>
    </location>
</feature>
<feature type="sequence variant" id="VAR_055511" description="In dbSNP:rs11999308.">
    <original>T</original>
    <variation>I</variation>
    <location>
        <position position="942"/>
    </location>
</feature>
<feature type="sequence variant" id="VAR_055512" description="In dbSNP:rs12341435.">
    <original>E</original>
    <variation>D</variation>
    <location>
        <position position="945"/>
    </location>
</feature>
<feature type="sequence conflict" description="In Ref. 4; AAH56266." evidence="6" ref="4">
    <location>
        <position position="288"/>
    </location>
</feature>
<feature type="sequence conflict" description="In Ref. 1; BAC23111 and 4; AAI52435." evidence="6" ref="1 4">
    <original>S</original>
    <variation>N</variation>
    <location>
        <position position="727"/>
    </location>
</feature>
<feature type="sequence conflict" description="In Ref. 1; BAC23111 and 4; AAI52435." evidence="6" ref="1 4">
    <original>A</original>
    <variation>V</variation>
    <location>
        <position position="897"/>
    </location>
</feature>
<feature type="sequence conflict" description="In Ref. 1; BAC23111 and 4; AAI52435." evidence="6" ref="1 4">
    <original>G</original>
    <variation>A</variation>
    <location>
        <position position="900"/>
    </location>
</feature>
<dbReference type="EMBL" id="AB095935">
    <property type="protein sequence ID" value="BAC23111.1"/>
    <property type="status" value="ALT_INIT"/>
    <property type="molecule type" value="mRNA"/>
</dbReference>
<dbReference type="EMBL" id="AK093059">
    <property type="protein sequence ID" value="BAC04038.1"/>
    <property type="molecule type" value="mRNA"/>
</dbReference>
<dbReference type="EMBL" id="AL390726">
    <property type="status" value="NOT_ANNOTATED_CDS"/>
    <property type="molecule type" value="Genomic_DNA"/>
</dbReference>
<dbReference type="EMBL" id="AL591543">
    <property type="status" value="NOT_ANNOTATED_CDS"/>
    <property type="molecule type" value="Genomic_DNA"/>
</dbReference>
<dbReference type="EMBL" id="BC056266">
    <property type="protein sequence ID" value="AAH56266.1"/>
    <property type="status" value="ALT_SEQ"/>
    <property type="molecule type" value="mRNA"/>
</dbReference>
<dbReference type="EMBL" id="BC152434">
    <property type="protein sequence ID" value="AAI52435.1"/>
    <property type="molecule type" value="mRNA"/>
</dbReference>
<dbReference type="CCDS" id="CCDS55311.1">
    <molecule id="Q8IVF6-1"/>
</dbReference>
<dbReference type="RefSeq" id="NP_671728.2">
    <molecule id="Q8IVF6-1"/>
    <property type="nucleotide sequence ID" value="NM_147195.4"/>
</dbReference>
<dbReference type="RefSeq" id="XP_011516141.1">
    <molecule id="Q8IVF6-1"/>
    <property type="nucleotide sequence ID" value="XM_011517839.4"/>
</dbReference>
<dbReference type="RefSeq" id="XP_054218583.1">
    <molecule id="Q8IVF6-1"/>
    <property type="nucleotide sequence ID" value="XM_054362608.1"/>
</dbReference>
<dbReference type="SMR" id="Q8IVF6"/>
<dbReference type="BioGRID" id="128979">
    <property type="interactions" value="11"/>
</dbReference>
<dbReference type="FunCoup" id="Q8IVF6">
    <property type="interactions" value="97"/>
</dbReference>
<dbReference type="IntAct" id="Q8IVF6">
    <property type="interactions" value="5"/>
</dbReference>
<dbReference type="MINT" id="Q8IVF6"/>
<dbReference type="STRING" id="9606.ENSP00000382610"/>
<dbReference type="GlyGen" id="Q8IVF6">
    <property type="glycosylation" value="3 sites, 1 O-linked glycan (3 sites)"/>
</dbReference>
<dbReference type="iPTMnet" id="Q8IVF6"/>
<dbReference type="PhosphoSitePlus" id="Q8IVF6"/>
<dbReference type="BioMuta" id="ANKRD18A"/>
<dbReference type="DMDM" id="166898074"/>
<dbReference type="jPOST" id="Q8IVF6"/>
<dbReference type="MassIVE" id="Q8IVF6"/>
<dbReference type="PaxDb" id="9606-ENSP00000382610"/>
<dbReference type="PeptideAtlas" id="Q8IVF6"/>
<dbReference type="ProteomicsDB" id="70698">
    <molecule id="Q8IVF6-1"/>
</dbReference>
<dbReference type="Antibodypedia" id="67512">
    <property type="antibodies" value="86 antibodies from 16 providers"/>
</dbReference>
<dbReference type="DNASU" id="253650"/>
<dbReference type="Ensembl" id="ENST00000399703.6">
    <molecule id="Q8IVF6-1"/>
    <property type="protein sequence ID" value="ENSP00000382610.4"/>
    <property type="gene ID" value="ENSG00000180071.21"/>
</dbReference>
<dbReference type="GeneID" id="253650"/>
<dbReference type="KEGG" id="hsa:253650"/>
<dbReference type="MANE-Select" id="ENST00000399703.6">
    <property type="protein sequence ID" value="ENSP00000382610.4"/>
    <property type="RefSeq nucleotide sequence ID" value="NM_147195.4"/>
    <property type="RefSeq protein sequence ID" value="NP_671728.2"/>
</dbReference>
<dbReference type="UCSC" id="uc004abg.5">
    <molecule id="Q8IVF6-1"/>
    <property type="organism name" value="human"/>
</dbReference>
<dbReference type="AGR" id="HGNC:23643"/>
<dbReference type="CTD" id="253650"/>
<dbReference type="DisGeNET" id="253650"/>
<dbReference type="GeneCards" id="ANKRD18A"/>
<dbReference type="HGNC" id="HGNC:23643">
    <property type="gene designation" value="ANKRD18A"/>
</dbReference>
<dbReference type="HPA" id="ENSG00000180071">
    <property type="expression patterns" value="Tissue enhanced (bone marrow, testis)"/>
</dbReference>
<dbReference type="MIM" id="620259">
    <property type="type" value="gene"/>
</dbReference>
<dbReference type="neXtProt" id="NX_Q8IVF6"/>
<dbReference type="OpenTargets" id="ENSG00000180071"/>
<dbReference type="PharmGKB" id="PA134889624"/>
<dbReference type="VEuPathDB" id="HostDB:ENSG00000180071"/>
<dbReference type="eggNOG" id="KOG0504">
    <property type="taxonomic scope" value="Eukaryota"/>
</dbReference>
<dbReference type="GeneTree" id="ENSGT00940000164347"/>
<dbReference type="HOGENOM" id="CLU_001111_0_0_1"/>
<dbReference type="InParanoid" id="Q8IVF6"/>
<dbReference type="OMA" id="WALAPVY"/>
<dbReference type="OrthoDB" id="9535605at2759"/>
<dbReference type="PAN-GO" id="Q8IVF6">
    <property type="GO annotations" value="0 GO annotations based on evolutionary models"/>
</dbReference>
<dbReference type="PhylomeDB" id="Q8IVF6"/>
<dbReference type="TreeFam" id="TF333496"/>
<dbReference type="PathwayCommons" id="Q8IVF6"/>
<dbReference type="SignaLink" id="Q8IVF6"/>
<dbReference type="BioGRID-ORCS" id="253650">
    <property type="hits" value="41 hits in 1124 CRISPR screens"/>
</dbReference>
<dbReference type="ChiTaRS" id="ANKRD18A">
    <property type="organism name" value="human"/>
</dbReference>
<dbReference type="GenomeRNAi" id="253650"/>
<dbReference type="Pharos" id="Q8IVF6">
    <property type="development level" value="Tdark"/>
</dbReference>
<dbReference type="PRO" id="PR:Q8IVF6"/>
<dbReference type="Proteomes" id="UP000005640">
    <property type="component" value="Chromosome 9"/>
</dbReference>
<dbReference type="RNAct" id="Q8IVF6">
    <property type="molecule type" value="protein"/>
</dbReference>
<dbReference type="Bgee" id="ENSG00000180071">
    <property type="expression patterns" value="Expressed in corpus callosum and 102 other cell types or tissues"/>
</dbReference>
<dbReference type="ExpressionAtlas" id="Q8IVF6">
    <property type="expression patterns" value="baseline and differential"/>
</dbReference>
<dbReference type="Gene3D" id="1.25.40.20">
    <property type="entry name" value="Ankyrin repeat-containing domain"/>
    <property type="match status" value="2"/>
</dbReference>
<dbReference type="InterPro" id="IPR050657">
    <property type="entry name" value="Ankyrin_repeat_domain"/>
</dbReference>
<dbReference type="InterPro" id="IPR002110">
    <property type="entry name" value="Ankyrin_rpt"/>
</dbReference>
<dbReference type="InterPro" id="IPR036770">
    <property type="entry name" value="Ankyrin_rpt-contain_sf"/>
</dbReference>
<dbReference type="InterPro" id="IPR039497">
    <property type="entry name" value="CC144C-like_CC_dom"/>
</dbReference>
<dbReference type="InterPro" id="IPR021885">
    <property type="entry name" value="DUF3496"/>
</dbReference>
<dbReference type="PANTHER" id="PTHR24147">
    <property type="entry name" value="ANKYRIN REPEAT DOMAIN 36-RELATED"/>
    <property type="match status" value="1"/>
</dbReference>
<dbReference type="PANTHER" id="PTHR24147:SF22">
    <property type="entry name" value="ANKYRIN REPEAT DOMAIN-CONTAINING PROTEIN 18A"/>
    <property type="match status" value="1"/>
</dbReference>
<dbReference type="Pfam" id="PF00023">
    <property type="entry name" value="Ank"/>
    <property type="match status" value="2"/>
</dbReference>
<dbReference type="Pfam" id="PF12796">
    <property type="entry name" value="Ank_2"/>
    <property type="match status" value="1"/>
</dbReference>
<dbReference type="Pfam" id="PF14915">
    <property type="entry name" value="CCDC144C"/>
    <property type="match status" value="1"/>
</dbReference>
<dbReference type="Pfam" id="PF12001">
    <property type="entry name" value="DUF3496"/>
    <property type="match status" value="1"/>
</dbReference>
<dbReference type="SMART" id="SM00248">
    <property type="entry name" value="ANK"/>
    <property type="match status" value="6"/>
</dbReference>
<dbReference type="SUPFAM" id="SSF48403">
    <property type="entry name" value="Ankyrin repeat"/>
    <property type="match status" value="1"/>
</dbReference>
<dbReference type="PROSITE" id="PS50297">
    <property type="entry name" value="ANK_REP_REGION"/>
    <property type="match status" value="1"/>
</dbReference>
<dbReference type="PROSITE" id="PS50088">
    <property type="entry name" value="ANK_REPEAT"/>
    <property type="match status" value="3"/>
</dbReference>
<keyword id="KW-0025">Alternative splicing</keyword>
<keyword id="KW-0040">ANK repeat</keyword>
<keyword id="KW-0175">Coiled coil</keyword>
<keyword id="KW-1185">Reference proteome</keyword>
<keyword id="KW-0677">Repeat</keyword>
<reference key="1">
    <citation type="submission" date="2002-11" db="EMBL/GenBank/DDBJ databases">
        <title>The nucleotide sequence of a long cDNA clone isolated from human.</title>
        <authorList>
            <person name="Nagase T."/>
            <person name="Kikuno R."/>
            <person name="Ohara O."/>
        </authorList>
    </citation>
    <scope>NUCLEOTIDE SEQUENCE [LARGE SCALE MRNA] (ISOFORM 1)</scope>
    <scope>VARIANT LYS-130</scope>
    <source>
        <tissue>Brain</tissue>
    </source>
</reference>
<reference key="2">
    <citation type="journal article" date="2004" name="Nat. Genet.">
        <title>Complete sequencing and characterization of 21,243 full-length human cDNAs.</title>
        <authorList>
            <person name="Ota T."/>
            <person name="Suzuki Y."/>
            <person name="Nishikawa T."/>
            <person name="Otsuki T."/>
            <person name="Sugiyama T."/>
            <person name="Irie R."/>
            <person name="Wakamatsu A."/>
            <person name="Hayashi K."/>
            <person name="Sato H."/>
            <person name="Nagai K."/>
            <person name="Kimura K."/>
            <person name="Makita H."/>
            <person name="Sekine M."/>
            <person name="Obayashi M."/>
            <person name="Nishi T."/>
            <person name="Shibahara T."/>
            <person name="Tanaka T."/>
            <person name="Ishii S."/>
            <person name="Yamamoto J."/>
            <person name="Saito K."/>
            <person name="Kawai Y."/>
            <person name="Isono Y."/>
            <person name="Nakamura Y."/>
            <person name="Nagahari K."/>
            <person name="Murakami K."/>
            <person name="Yasuda T."/>
            <person name="Iwayanagi T."/>
            <person name="Wagatsuma M."/>
            <person name="Shiratori A."/>
            <person name="Sudo H."/>
            <person name="Hosoiri T."/>
            <person name="Kaku Y."/>
            <person name="Kodaira H."/>
            <person name="Kondo H."/>
            <person name="Sugawara M."/>
            <person name="Takahashi M."/>
            <person name="Kanda K."/>
            <person name="Yokoi T."/>
            <person name="Furuya T."/>
            <person name="Kikkawa E."/>
            <person name="Omura Y."/>
            <person name="Abe K."/>
            <person name="Kamihara K."/>
            <person name="Katsuta N."/>
            <person name="Sato K."/>
            <person name="Tanikawa M."/>
            <person name="Yamazaki M."/>
            <person name="Ninomiya K."/>
            <person name="Ishibashi T."/>
            <person name="Yamashita H."/>
            <person name="Murakawa K."/>
            <person name="Fujimori K."/>
            <person name="Tanai H."/>
            <person name="Kimata M."/>
            <person name="Watanabe M."/>
            <person name="Hiraoka S."/>
            <person name="Chiba Y."/>
            <person name="Ishida S."/>
            <person name="Ono Y."/>
            <person name="Takiguchi S."/>
            <person name="Watanabe S."/>
            <person name="Yosida M."/>
            <person name="Hotuta T."/>
            <person name="Kusano J."/>
            <person name="Kanehori K."/>
            <person name="Takahashi-Fujii A."/>
            <person name="Hara H."/>
            <person name="Tanase T.-O."/>
            <person name="Nomura Y."/>
            <person name="Togiya S."/>
            <person name="Komai F."/>
            <person name="Hara R."/>
            <person name="Takeuchi K."/>
            <person name="Arita M."/>
            <person name="Imose N."/>
            <person name="Musashino K."/>
            <person name="Yuuki H."/>
            <person name="Oshima A."/>
            <person name="Sasaki N."/>
            <person name="Aotsuka S."/>
            <person name="Yoshikawa Y."/>
            <person name="Matsunawa H."/>
            <person name="Ichihara T."/>
            <person name="Shiohata N."/>
            <person name="Sano S."/>
            <person name="Moriya S."/>
            <person name="Momiyama H."/>
            <person name="Satoh N."/>
            <person name="Takami S."/>
            <person name="Terashima Y."/>
            <person name="Suzuki O."/>
            <person name="Nakagawa S."/>
            <person name="Senoh A."/>
            <person name="Mizoguchi H."/>
            <person name="Goto Y."/>
            <person name="Shimizu F."/>
            <person name="Wakebe H."/>
            <person name="Hishigaki H."/>
            <person name="Watanabe T."/>
            <person name="Sugiyama A."/>
            <person name="Takemoto M."/>
            <person name="Kawakami B."/>
            <person name="Yamazaki M."/>
            <person name="Watanabe K."/>
            <person name="Kumagai A."/>
            <person name="Itakura S."/>
            <person name="Fukuzumi Y."/>
            <person name="Fujimori Y."/>
            <person name="Komiyama M."/>
            <person name="Tashiro H."/>
            <person name="Tanigami A."/>
            <person name="Fujiwara T."/>
            <person name="Ono T."/>
            <person name="Yamada K."/>
            <person name="Fujii Y."/>
            <person name="Ozaki K."/>
            <person name="Hirao M."/>
            <person name="Ohmori Y."/>
            <person name="Kawabata A."/>
            <person name="Hikiji T."/>
            <person name="Kobatake N."/>
            <person name="Inagaki H."/>
            <person name="Ikema Y."/>
            <person name="Okamoto S."/>
            <person name="Okitani R."/>
            <person name="Kawakami T."/>
            <person name="Noguchi S."/>
            <person name="Itoh T."/>
            <person name="Shigeta K."/>
            <person name="Senba T."/>
            <person name="Matsumura K."/>
            <person name="Nakajima Y."/>
            <person name="Mizuno T."/>
            <person name="Morinaga M."/>
            <person name="Sasaki M."/>
            <person name="Togashi T."/>
            <person name="Oyama M."/>
            <person name="Hata H."/>
            <person name="Watanabe M."/>
            <person name="Komatsu T."/>
            <person name="Mizushima-Sugano J."/>
            <person name="Satoh T."/>
            <person name="Shirai Y."/>
            <person name="Takahashi Y."/>
            <person name="Nakagawa K."/>
            <person name="Okumura K."/>
            <person name="Nagase T."/>
            <person name="Nomura N."/>
            <person name="Kikuchi H."/>
            <person name="Masuho Y."/>
            <person name="Yamashita R."/>
            <person name="Nakai K."/>
            <person name="Yada T."/>
            <person name="Nakamura Y."/>
            <person name="Ohara O."/>
            <person name="Isogai T."/>
            <person name="Sugano S."/>
        </authorList>
    </citation>
    <scope>NUCLEOTIDE SEQUENCE [LARGE SCALE MRNA] (ISOFORM 2)</scope>
    <source>
        <tissue>Testis</tissue>
    </source>
</reference>
<reference key="3">
    <citation type="journal article" date="2004" name="Nature">
        <title>DNA sequence and analysis of human chromosome 9.</title>
        <authorList>
            <person name="Humphray S.J."/>
            <person name="Oliver K."/>
            <person name="Hunt A.R."/>
            <person name="Plumb R.W."/>
            <person name="Loveland J.E."/>
            <person name="Howe K.L."/>
            <person name="Andrews T.D."/>
            <person name="Searle S."/>
            <person name="Hunt S.E."/>
            <person name="Scott C.E."/>
            <person name="Jones M.C."/>
            <person name="Ainscough R."/>
            <person name="Almeida J.P."/>
            <person name="Ambrose K.D."/>
            <person name="Ashwell R.I.S."/>
            <person name="Babbage A.K."/>
            <person name="Babbage S."/>
            <person name="Bagguley C.L."/>
            <person name="Bailey J."/>
            <person name="Banerjee R."/>
            <person name="Barker D.J."/>
            <person name="Barlow K.F."/>
            <person name="Bates K."/>
            <person name="Beasley H."/>
            <person name="Beasley O."/>
            <person name="Bird C.P."/>
            <person name="Bray-Allen S."/>
            <person name="Brown A.J."/>
            <person name="Brown J.Y."/>
            <person name="Burford D."/>
            <person name="Burrill W."/>
            <person name="Burton J."/>
            <person name="Carder C."/>
            <person name="Carter N.P."/>
            <person name="Chapman J.C."/>
            <person name="Chen Y."/>
            <person name="Clarke G."/>
            <person name="Clark S.Y."/>
            <person name="Clee C.M."/>
            <person name="Clegg S."/>
            <person name="Collier R.E."/>
            <person name="Corby N."/>
            <person name="Crosier M."/>
            <person name="Cummings A.T."/>
            <person name="Davies J."/>
            <person name="Dhami P."/>
            <person name="Dunn M."/>
            <person name="Dutta I."/>
            <person name="Dyer L.W."/>
            <person name="Earthrowl M.E."/>
            <person name="Faulkner L."/>
            <person name="Fleming C.J."/>
            <person name="Frankish A."/>
            <person name="Frankland J.A."/>
            <person name="French L."/>
            <person name="Fricker D.G."/>
            <person name="Garner P."/>
            <person name="Garnett J."/>
            <person name="Ghori J."/>
            <person name="Gilbert J.G.R."/>
            <person name="Glison C."/>
            <person name="Grafham D.V."/>
            <person name="Gribble S."/>
            <person name="Griffiths C."/>
            <person name="Griffiths-Jones S."/>
            <person name="Grocock R."/>
            <person name="Guy J."/>
            <person name="Hall R.E."/>
            <person name="Hammond S."/>
            <person name="Harley J.L."/>
            <person name="Harrison E.S.I."/>
            <person name="Hart E.A."/>
            <person name="Heath P.D."/>
            <person name="Henderson C.D."/>
            <person name="Hopkins B.L."/>
            <person name="Howard P.J."/>
            <person name="Howden P.J."/>
            <person name="Huckle E."/>
            <person name="Johnson C."/>
            <person name="Johnson D."/>
            <person name="Joy A.A."/>
            <person name="Kay M."/>
            <person name="Keenan S."/>
            <person name="Kershaw J.K."/>
            <person name="Kimberley A.M."/>
            <person name="King A."/>
            <person name="Knights A."/>
            <person name="Laird G.K."/>
            <person name="Langford C."/>
            <person name="Lawlor S."/>
            <person name="Leongamornlert D.A."/>
            <person name="Leversha M."/>
            <person name="Lloyd C."/>
            <person name="Lloyd D.M."/>
            <person name="Lovell J."/>
            <person name="Martin S."/>
            <person name="Mashreghi-Mohammadi M."/>
            <person name="Matthews L."/>
            <person name="McLaren S."/>
            <person name="McLay K.E."/>
            <person name="McMurray A."/>
            <person name="Milne S."/>
            <person name="Nickerson T."/>
            <person name="Nisbett J."/>
            <person name="Nordsiek G."/>
            <person name="Pearce A.V."/>
            <person name="Peck A.I."/>
            <person name="Porter K.M."/>
            <person name="Pandian R."/>
            <person name="Pelan S."/>
            <person name="Phillimore B."/>
            <person name="Povey S."/>
            <person name="Ramsey Y."/>
            <person name="Rand V."/>
            <person name="Scharfe M."/>
            <person name="Sehra H.K."/>
            <person name="Shownkeen R."/>
            <person name="Sims S.K."/>
            <person name="Skuce C.D."/>
            <person name="Smith M."/>
            <person name="Steward C.A."/>
            <person name="Swarbreck D."/>
            <person name="Sycamore N."/>
            <person name="Tester J."/>
            <person name="Thorpe A."/>
            <person name="Tracey A."/>
            <person name="Tromans A."/>
            <person name="Thomas D.W."/>
            <person name="Wall M."/>
            <person name="Wallis J.M."/>
            <person name="West A.P."/>
            <person name="Whitehead S.L."/>
            <person name="Willey D.L."/>
            <person name="Williams S.A."/>
            <person name="Wilming L."/>
            <person name="Wray P.W."/>
            <person name="Young L."/>
            <person name="Ashurst J.L."/>
            <person name="Coulson A."/>
            <person name="Blocker H."/>
            <person name="Durbin R.M."/>
            <person name="Sulston J.E."/>
            <person name="Hubbard T."/>
            <person name="Jackson M.J."/>
            <person name="Bentley D.R."/>
            <person name="Beck S."/>
            <person name="Rogers J."/>
            <person name="Dunham I."/>
        </authorList>
    </citation>
    <scope>NUCLEOTIDE SEQUENCE [LARGE SCALE GENOMIC DNA]</scope>
</reference>
<reference key="4">
    <citation type="journal article" date="2004" name="Genome Res.">
        <title>The status, quality, and expansion of the NIH full-length cDNA project: the Mammalian Gene Collection (MGC).</title>
        <authorList>
            <consortium name="The MGC Project Team"/>
        </authorList>
    </citation>
    <scope>NUCLEOTIDE SEQUENCE [LARGE SCALE MRNA] (ISOFORM 1)</scope>
    <scope>VARIANT LYS-130</scope>
    <source>
        <tissue>Prostate</tissue>
    </source>
</reference>